<sequence length="379" mass="42659">MTNIRKNHPLLKIINNSLIDLPTPPNISSLWNFGSLLGACLTIQIITGLFLAMHYTADTTTAFSSVTHICRDVNYGWTIRYLHANGASVFFLCLFIHVGRGLYYGSFTLLETWNVGIILLFSVMATAFMGYVLPWGQMSFWGATVITNLLSAIPYIGTDLVEWIWGGFSVSKATLTRFFALHFVLPFVILALVMIHLLFLHETGSNNPLGTSSNSDKIPFHPYYTTKDFLGLLLLILLLMVLTLFYPDLLGDPDNYSPANPLNTPPHIKPEWYFLFAYAILRSIPNKLGGVMALILSILILAIIPLLQPNKQQTMMFRPLSQFLFWILVADLLTLTWIGGQPVEDPFITIGQVASILYFLLMVLIMPTTCLIENKMLKW</sequence>
<accession>Q20FR3</accession>
<name>CYB_LEPED</name>
<protein>
    <recommendedName>
        <fullName>Cytochrome b</fullName>
    </recommendedName>
    <alternativeName>
        <fullName>Complex III subunit 3</fullName>
    </alternativeName>
    <alternativeName>
        <fullName>Complex III subunit III</fullName>
    </alternativeName>
    <alternativeName>
        <fullName>Cytochrome b-c1 complex subunit 3</fullName>
    </alternativeName>
    <alternativeName>
        <fullName>Ubiquinol-cytochrome-c reductase complex cytochrome b subunit</fullName>
    </alternativeName>
</protein>
<reference key="1">
    <citation type="journal article" date="2006" name="BMC Evol. Biol.">
        <title>Molecular phylogeny and taxonomic revision of the sportive lemurs (Lepilemur, Primates).</title>
        <authorList>
            <person name="Andriaholinirina N."/>
            <person name="Fausser J.-L."/>
            <person name="Roos C."/>
            <person name="Zinner D."/>
            <person name="Thalmann U."/>
            <person name="Rabarivola C."/>
            <person name="Ravoarimanana I."/>
            <person name="Ganzhorn J.U."/>
            <person name="Meier B."/>
            <person name="Hilgartner R."/>
            <person name="Walter L."/>
            <person name="Zaramody A."/>
            <person name="Langer C."/>
            <person name="Hahn T."/>
            <person name="Zimmermann E."/>
            <person name="Radespiel U."/>
            <person name="Craul M."/>
            <person name="Tomiuk J."/>
            <person name="Tattersall I."/>
            <person name="Rumpler Y."/>
        </authorList>
    </citation>
    <scope>NUCLEOTIDE SEQUENCE [GENOMIC DNA]</scope>
</reference>
<evidence type="ECO:0000250" key="1"/>
<evidence type="ECO:0000250" key="2">
    <source>
        <dbReference type="UniProtKB" id="P00157"/>
    </source>
</evidence>
<evidence type="ECO:0000255" key="3">
    <source>
        <dbReference type="PROSITE-ProRule" id="PRU00967"/>
    </source>
</evidence>
<evidence type="ECO:0000255" key="4">
    <source>
        <dbReference type="PROSITE-ProRule" id="PRU00968"/>
    </source>
</evidence>
<feature type="chain" id="PRO_0000254809" description="Cytochrome b">
    <location>
        <begin position="1"/>
        <end position="379"/>
    </location>
</feature>
<feature type="transmembrane region" description="Helical" evidence="2">
    <location>
        <begin position="33"/>
        <end position="53"/>
    </location>
</feature>
<feature type="transmembrane region" description="Helical" evidence="2">
    <location>
        <begin position="77"/>
        <end position="98"/>
    </location>
</feature>
<feature type="transmembrane region" description="Helical" evidence="2">
    <location>
        <begin position="113"/>
        <end position="133"/>
    </location>
</feature>
<feature type="transmembrane region" description="Helical" evidence="2">
    <location>
        <begin position="178"/>
        <end position="198"/>
    </location>
</feature>
<feature type="transmembrane region" description="Helical" evidence="2">
    <location>
        <begin position="226"/>
        <end position="246"/>
    </location>
</feature>
<feature type="transmembrane region" description="Helical" evidence="2">
    <location>
        <begin position="288"/>
        <end position="308"/>
    </location>
</feature>
<feature type="transmembrane region" description="Helical" evidence="2">
    <location>
        <begin position="320"/>
        <end position="340"/>
    </location>
</feature>
<feature type="transmembrane region" description="Helical" evidence="2">
    <location>
        <begin position="347"/>
        <end position="367"/>
    </location>
</feature>
<feature type="binding site" description="axial binding residue" evidence="2">
    <location>
        <position position="83"/>
    </location>
    <ligand>
        <name>heme b</name>
        <dbReference type="ChEBI" id="CHEBI:60344"/>
        <label>b562</label>
    </ligand>
    <ligandPart>
        <name>Fe</name>
        <dbReference type="ChEBI" id="CHEBI:18248"/>
    </ligandPart>
</feature>
<feature type="binding site" description="axial binding residue" evidence="2">
    <location>
        <position position="97"/>
    </location>
    <ligand>
        <name>heme b</name>
        <dbReference type="ChEBI" id="CHEBI:60344"/>
        <label>b566</label>
    </ligand>
    <ligandPart>
        <name>Fe</name>
        <dbReference type="ChEBI" id="CHEBI:18248"/>
    </ligandPart>
</feature>
<feature type="binding site" description="axial binding residue" evidence="2">
    <location>
        <position position="182"/>
    </location>
    <ligand>
        <name>heme b</name>
        <dbReference type="ChEBI" id="CHEBI:60344"/>
        <label>b562</label>
    </ligand>
    <ligandPart>
        <name>Fe</name>
        <dbReference type="ChEBI" id="CHEBI:18248"/>
    </ligandPart>
</feature>
<feature type="binding site" description="axial binding residue" evidence="2">
    <location>
        <position position="196"/>
    </location>
    <ligand>
        <name>heme b</name>
        <dbReference type="ChEBI" id="CHEBI:60344"/>
        <label>b566</label>
    </ligand>
    <ligandPart>
        <name>Fe</name>
        <dbReference type="ChEBI" id="CHEBI:18248"/>
    </ligandPart>
</feature>
<feature type="binding site" evidence="2">
    <location>
        <position position="201"/>
    </location>
    <ligand>
        <name>a ubiquinone</name>
        <dbReference type="ChEBI" id="CHEBI:16389"/>
    </ligand>
</feature>
<gene>
    <name type="primary">MT-CYB</name>
    <name type="synonym">COB</name>
    <name type="synonym">CYTB</name>
    <name type="synonym">MTCYB</name>
</gene>
<organism>
    <name type="scientific">Lepilemur edwardsi</name>
    <name type="common">Milne-Edwards's sportive lemur</name>
    <dbReference type="NCBI Taxonomy" id="122230"/>
    <lineage>
        <taxon>Eukaryota</taxon>
        <taxon>Metazoa</taxon>
        <taxon>Chordata</taxon>
        <taxon>Craniata</taxon>
        <taxon>Vertebrata</taxon>
        <taxon>Euteleostomi</taxon>
        <taxon>Mammalia</taxon>
        <taxon>Eutheria</taxon>
        <taxon>Euarchontoglires</taxon>
        <taxon>Primates</taxon>
        <taxon>Strepsirrhini</taxon>
        <taxon>Lemuriformes</taxon>
        <taxon>Lepilemuridae</taxon>
        <taxon>Lepilemur</taxon>
    </lineage>
</organism>
<geneLocation type="mitochondrion"/>
<proteinExistence type="inferred from homology"/>
<comment type="function">
    <text evidence="2">Component of the ubiquinol-cytochrome c reductase complex (complex III or cytochrome b-c1 complex) that is part of the mitochondrial respiratory chain. The b-c1 complex mediates electron transfer from ubiquinol to cytochrome c. Contributes to the generation of a proton gradient across the mitochondrial membrane that is then used for ATP synthesis.</text>
</comment>
<comment type="cofactor">
    <cofactor evidence="2">
        <name>heme b</name>
        <dbReference type="ChEBI" id="CHEBI:60344"/>
    </cofactor>
    <text evidence="2">Binds 2 heme b groups non-covalently.</text>
</comment>
<comment type="subunit">
    <text evidence="2">The cytochrome bc1 complex contains 11 subunits: 3 respiratory subunits (MT-CYB, CYC1 and UQCRFS1), 2 core proteins (UQCRC1 and UQCRC2) and 6 low-molecular weight proteins (UQCRH/QCR6, UQCRB/QCR7, UQCRQ/QCR8, UQCR10/QCR9, UQCR11/QCR10 and a cleavage product of UQCRFS1). This cytochrome bc1 complex then forms a dimer.</text>
</comment>
<comment type="subcellular location">
    <subcellularLocation>
        <location evidence="2">Mitochondrion inner membrane</location>
        <topology evidence="2">Multi-pass membrane protein</topology>
    </subcellularLocation>
</comment>
<comment type="miscellaneous">
    <text evidence="1">Heme 1 (or BL or b562) is low-potential and absorbs at about 562 nm, and heme 2 (or BH or b566) is high-potential and absorbs at about 566 nm.</text>
</comment>
<comment type="similarity">
    <text evidence="3 4">Belongs to the cytochrome b family.</text>
</comment>
<comment type="caution">
    <text evidence="2">The full-length protein contains only eight transmembrane helices, not nine as predicted by bioinformatics tools.</text>
</comment>
<dbReference type="EMBL" id="DQ109004">
    <property type="protein sequence ID" value="AAZ92434.1"/>
    <property type="molecule type" value="Genomic_DNA"/>
</dbReference>
<dbReference type="EMBL" id="DQ109005">
    <property type="protein sequence ID" value="AAZ92435.1"/>
    <property type="molecule type" value="Genomic_DNA"/>
</dbReference>
<dbReference type="EMBL" id="DQ109006">
    <property type="protein sequence ID" value="AAZ92436.1"/>
    <property type="molecule type" value="Genomic_DNA"/>
</dbReference>
<dbReference type="EMBL" id="DQ234888">
    <property type="protein sequence ID" value="ABB80437.1"/>
    <property type="molecule type" value="Genomic_DNA"/>
</dbReference>
<dbReference type="SMR" id="Q20FR3"/>
<dbReference type="GO" id="GO:0005743">
    <property type="term" value="C:mitochondrial inner membrane"/>
    <property type="evidence" value="ECO:0007669"/>
    <property type="project" value="UniProtKB-SubCell"/>
</dbReference>
<dbReference type="GO" id="GO:0045275">
    <property type="term" value="C:respiratory chain complex III"/>
    <property type="evidence" value="ECO:0007669"/>
    <property type="project" value="InterPro"/>
</dbReference>
<dbReference type="GO" id="GO:0046872">
    <property type="term" value="F:metal ion binding"/>
    <property type="evidence" value="ECO:0007669"/>
    <property type="project" value="UniProtKB-KW"/>
</dbReference>
<dbReference type="GO" id="GO:0008121">
    <property type="term" value="F:ubiquinol-cytochrome-c reductase activity"/>
    <property type="evidence" value="ECO:0007669"/>
    <property type="project" value="InterPro"/>
</dbReference>
<dbReference type="GO" id="GO:0006122">
    <property type="term" value="P:mitochondrial electron transport, ubiquinol to cytochrome c"/>
    <property type="evidence" value="ECO:0007669"/>
    <property type="project" value="TreeGrafter"/>
</dbReference>
<dbReference type="CDD" id="cd00290">
    <property type="entry name" value="cytochrome_b_C"/>
    <property type="match status" value="1"/>
</dbReference>
<dbReference type="CDD" id="cd00284">
    <property type="entry name" value="Cytochrome_b_N"/>
    <property type="match status" value="1"/>
</dbReference>
<dbReference type="FunFam" id="1.20.810.10:FF:000002">
    <property type="entry name" value="Cytochrome b"/>
    <property type="match status" value="1"/>
</dbReference>
<dbReference type="Gene3D" id="1.20.810.10">
    <property type="entry name" value="Cytochrome Bc1 Complex, Chain C"/>
    <property type="match status" value="1"/>
</dbReference>
<dbReference type="InterPro" id="IPR005798">
    <property type="entry name" value="Cyt_b/b6_C"/>
</dbReference>
<dbReference type="InterPro" id="IPR036150">
    <property type="entry name" value="Cyt_b/b6_C_sf"/>
</dbReference>
<dbReference type="InterPro" id="IPR005797">
    <property type="entry name" value="Cyt_b/b6_N"/>
</dbReference>
<dbReference type="InterPro" id="IPR027387">
    <property type="entry name" value="Cytb/b6-like_sf"/>
</dbReference>
<dbReference type="InterPro" id="IPR030689">
    <property type="entry name" value="Cytochrome_b"/>
</dbReference>
<dbReference type="InterPro" id="IPR048260">
    <property type="entry name" value="Cytochrome_b_C_euk/bac"/>
</dbReference>
<dbReference type="InterPro" id="IPR048259">
    <property type="entry name" value="Cytochrome_b_N_euk/bac"/>
</dbReference>
<dbReference type="InterPro" id="IPR016174">
    <property type="entry name" value="Di-haem_cyt_TM"/>
</dbReference>
<dbReference type="PANTHER" id="PTHR19271">
    <property type="entry name" value="CYTOCHROME B"/>
    <property type="match status" value="1"/>
</dbReference>
<dbReference type="PANTHER" id="PTHR19271:SF16">
    <property type="entry name" value="CYTOCHROME B"/>
    <property type="match status" value="1"/>
</dbReference>
<dbReference type="Pfam" id="PF00032">
    <property type="entry name" value="Cytochrom_B_C"/>
    <property type="match status" value="1"/>
</dbReference>
<dbReference type="Pfam" id="PF00033">
    <property type="entry name" value="Cytochrome_B"/>
    <property type="match status" value="1"/>
</dbReference>
<dbReference type="PIRSF" id="PIRSF038885">
    <property type="entry name" value="COB"/>
    <property type="match status" value="1"/>
</dbReference>
<dbReference type="SUPFAM" id="SSF81648">
    <property type="entry name" value="a domain/subunit of cytochrome bc1 complex (Ubiquinol-cytochrome c reductase)"/>
    <property type="match status" value="1"/>
</dbReference>
<dbReference type="SUPFAM" id="SSF81342">
    <property type="entry name" value="Transmembrane di-heme cytochromes"/>
    <property type="match status" value="1"/>
</dbReference>
<dbReference type="PROSITE" id="PS51003">
    <property type="entry name" value="CYTB_CTER"/>
    <property type="match status" value="1"/>
</dbReference>
<dbReference type="PROSITE" id="PS51002">
    <property type="entry name" value="CYTB_NTER"/>
    <property type="match status" value="1"/>
</dbReference>
<keyword id="KW-0249">Electron transport</keyword>
<keyword id="KW-0349">Heme</keyword>
<keyword id="KW-0408">Iron</keyword>
<keyword id="KW-0472">Membrane</keyword>
<keyword id="KW-0479">Metal-binding</keyword>
<keyword id="KW-0496">Mitochondrion</keyword>
<keyword id="KW-0999">Mitochondrion inner membrane</keyword>
<keyword id="KW-0679">Respiratory chain</keyword>
<keyword id="KW-0812">Transmembrane</keyword>
<keyword id="KW-1133">Transmembrane helix</keyword>
<keyword id="KW-0813">Transport</keyword>
<keyword id="KW-0830">Ubiquinone</keyword>